<protein>
    <recommendedName>
        <fullName evidence="1">Imidazoleglycerol-phosphate dehydratase</fullName>
        <shortName evidence="1">IGPD</shortName>
        <ecNumber evidence="1">4.2.1.19</ecNumber>
    </recommendedName>
</protein>
<gene>
    <name evidence="1" type="primary">hisB</name>
    <name type="ordered locus">BAV3316</name>
</gene>
<dbReference type="EC" id="4.2.1.19" evidence="1"/>
<dbReference type="EMBL" id="AM167904">
    <property type="protein sequence ID" value="CAJ50926.1"/>
    <property type="molecule type" value="Genomic_DNA"/>
</dbReference>
<dbReference type="RefSeq" id="WP_012418953.1">
    <property type="nucleotide sequence ID" value="NC_010645.1"/>
</dbReference>
<dbReference type="SMR" id="Q2KTT4"/>
<dbReference type="STRING" id="360910.BAV3316"/>
<dbReference type="KEGG" id="bav:BAV3316"/>
<dbReference type="eggNOG" id="COG0131">
    <property type="taxonomic scope" value="Bacteria"/>
</dbReference>
<dbReference type="HOGENOM" id="CLU_044308_2_0_4"/>
<dbReference type="OrthoDB" id="9790411at2"/>
<dbReference type="UniPathway" id="UPA00031">
    <property type="reaction ID" value="UER00011"/>
</dbReference>
<dbReference type="Proteomes" id="UP000001977">
    <property type="component" value="Chromosome"/>
</dbReference>
<dbReference type="GO" id="GO:0005737">
    <property type="term" value="C:cytoplasm"/>
    <property type="evidence" value="ECO:0007669"/>
    <property type="project" value="UniProtKB-SubCell"/>
</dbReference>
<dbReference type="GO" id="GO:0004424">
    <property type="term" value="F:imidazoleglycerol-phosphate dehydratase activity"/>
    <property type="evidence" value="ECO:0007669"/>
    <property type="project" value="UniProtKB-UniRule"/>
</dbReference>
<dbReference type="GO" id="GO:0000105">
    <property type="term" value="P:L-histidine biosynthetic process"/>
    <property type="evidence" value="ECO:0007669"/>
    <property type="project" value="UniProtKB-UniRule"/>
</dbReference>
<dbReference type="CDD" id="cd07914">
    <property type="entry name" value="IGPD"/>
    <property type="match status" value="1"/>
</dbReference>
<dbReference type="FunFam" id="3.30.230.40:FF:000002">
    <property type="entry name" value="Imidazoleglycerol-phosphate dehydratase"/>
    <property type="match status" value="1"/>
</dbReference>
<dbReference type="FunFam" id="3.30.230.40:FF:000003">
    <property type="entry name" value="Imidazoleglycerol-phosphate dehydratase HisB"/>
    <property type="match status" value="1"/>
</dbReference>
<dbReference type="Gene3D" id="3.30.230.40">
    <property type="entry name" value="Imidazole glycerol phosphate dehydratase, domain 1"/>
    <property type="match status" value="2"/>
</dbReference>
<dbReference type="HAMAP" id="MF_00076">
    <property type="entry name" value="HisB"/>
    <property type="match status" value="1"/>
</dbReference>
<dbReference type="InterPro" id="IPR038494">
    <property type="entry name" value="IGPD_sf"/>
</dbReference>
<dbReference type="InterPro" id="IPR000807">
    <property type="entry name" value="ImidazoleglycerolP_deHydtase"/>
</dbReference>
<dbReference type="InterPro" id="IPR020565">
    <property type="entry name" value="ImidazoleglycerP_deHydtase_CS"/>
</dbReference>
<dbReference type="InterPro" id="IPR020568">
    <property type="entry name" value="Ribosomal_Su5_D2-typ_SF"/>
</dbReference>
<dbReference type="NCBIfam" id="NF002106">
    <property type="entry name" value="PRK00951.1-1"/>
    <property type="match status" value="1"/>
</dbReference>
<dbReference type="NCBIfam" id="NF002109">
    <property type="entry name" value="PRK00951.1-5"/>
    <property type="match status" value="1"/>
</dbReference>
<dbReference type="NCBIfam" id="NF002111">
    <property type="entry name" value="PRK00951.2-1"/>
    <property type="match status" value="1"/>
</dbReference>
<dbReference type="NCBIfam" id="NF002114">
    <property type="entry name" value="PRK00951.2-4"/>
    <property type="match status" value="1"/>
</dbReference>
<dbReference type="PANTHER" id="PTHR23133:SF2">
    <property type="entry name" value="IMIDAZOLEGLYCEROL-PHOSPHATE DEHYDRATASE"/>
    <property type="match status" value="1"/>
</dbReference>
<dbReference type="PANTHER" id="PTHR23133">
    <property type="entry name" value="IMIDAZOLEGLYCEROL-PHOSPHATE DEHYDRATASE HIS7"/>
    <property type="match status" value="1"/>
</dbReference>
<dbReference type="Pfam" id="PF00475">
    <property type="entry name" value="IGPD"/>
    <property type="match status" value="1"/>
</dbReference>
<dbReference type="SUPFAM" id="SSF54211">
    <property type="entry name" value="Ribosomal protein S5 domain 2-like"/>
    <property type="match status" value="2"/>
</dbReference>
<dbReference type="PROSITE" id="PS00954">
    <property type="entry name" value="IGP_DEHYDRATASE_1"/>
    <property type="match status" value="1"/>
</dbReference>
<dbReference type="PROSITE" id="PS00955">
    <property type="entry name" value="IGP_DEHYDRATASE_2"/>
    <property type="match status" value="1"/>
</dbReference>
<proteinExistence type="inferred from homology"/>
<accession>Q2KTT4</accession>
<feature type="chain" id="PRO_1000010246" description="Imidazoleglycerol-phosphate dehydratase">
    <location>
        <begin position="1"/>
        <end position="195"/>
    </location>
</feature>
<reference key="1">
    <citation type="journal article" date="2006" name="J. Bacteriol.">
        <title>Comparison of the genome sequence of the poultry pathogen Bordetella avium with those of B. bronchiseptica, B. pertussis, and B. parapertussis reveals extensive diversity in surface structures associated with host interaction.</title>
        <authorList>
            <person name="Sebaihia M."/>
            <person name="Preston A."/>
            <person name="Maskell D.J."/>
            <person name="Kuzmiak H."/>
            <person name="Connell T.D."/>
            <person name="King N.D."/>
            <person name="Orndorff P.E."/>
            <person name="Miyamoto D.M."/>
            <person name="Thomson N.R."/>
            <person name="Harris D."/>
            <person name="Goble A."/>
            <person name="Lord A."/>
            <person name="Murphy L."/>
            <person name="Quail M.A."/>
            <person name="Rutter S."/>
            <person name="Squares R."/>
            <person name="Squares S."/>
            <person name="Woodward J."/>
            <person name="Parkhill J."/>
            <person name="Temple L.M."/>
        </authorList>
    </citation>
    <scope>NUCLEOTIDE SEQUENCE [LARGE SCALE GENOMIC DNA]</scope>
    <source>
        <strain>197N</strain>
    </source>
</reference>
<sequence>MRTAEIIRNTNETRIRVAVNLDGTGKQSIDTGVPFLDHMLDQIARHGLVDLDIKAEGDLHIDAHHTVEDVGITLGMAIAKAIGNKAGLRRYGHAYVPLDEALSRVVIDFSGRPGLEYHIDFTRARIGDFDVDLTREFFQGLVNHALMTLHIDNLRGFNAHHQAETVFKAFGRALRMAMEVDPRMGDAIPSTKGVL</sequence>
<keyword id="KW-0028">Amino-acid biosynthesis</keyword>
<keyword id="KW-0963">Cytoplasm</keyword>
<keyword id="KW-0368">Histidine biosynthesis</keyword>
<keyword id="KW-0456">Lyase</keyword>
<keyword id="KW-1185">Reference proteome</keyword>
<evidence type="ECO:0000255" key="1">
    <source>
        <dbReference type="HAMAP-Rule" id="MF_00076"/>
    </source>
</evidence>
<organism>
    <name type="scientific">Bordetella avium (strain 197N)</name>
    <dbReference type="NCBI Taxonomy" id="360910"/>
    <lineage>
        <taxon>Bacteria</taxon>
        <taxon>Pseudomonadati</taxon>
        <taxon>Pseudomonadota</taxon>
        <taxon>Betaproteobacteria</taxon>
        <taxon>Burkholderiales</taxon>
        <taxon>Alcaligenaceae</taxon>
        <taxon>Bordetella</taxon>
    </lineage>
</organism>
<comment type="catalytic activity">
    <reaction evidence="1">
        <text>D-erythro-1-(imidazol-4-yl)glycerol 3-phosphate = 3-(imidazol-4-yl)-2-oxopropyl phosphate + H2O</text>
        <dbReference type="Rhea" id="RHEA:11040"/>
        <dbReference type="ChEBI" id="CHEBI:15377"/>
        <dbReference type="ChEBI" id="CHEBI:57766"/>
        <dbReference type="ChEBI" id="CHEBI:58278"/>
        <dbReference type="EC" id="4.2.1.19"/>
    </reaction>
</comment>
<comment type="pathway">
    <text evidence="1">Amino-acid biosynthesis; L-histidine biosynthesis; L-histidine from 5-phospho-alpha-D-ribose 1-diphosphate: step 6/9.</text>
</comment>
<comment type="subcellular location">
    <subcellularLocation>
        <location evidence="1">Cytoplasm</location>
    </subcellularLocation>
</comment>
<comment type="similarity">
    <text evidence="1">Belongs to the imidazoleglycerol-phosphate dehydratase family.</text>
</comment>
<name>HIS7_BORA1</name>